<name>ALF1_CLOAB</name>
<keyword id="KW-0324">Glycolysis</keyword>
<keyword id="KW-0456">Lyase</keyword>
<keyword id="KW-0614">Plasmid</keyword>
<keyword id="KW-1185">Reference proteome</keyword>
<keyword id="KW-0704">Schiff base</keyword>
<proteinExistence type="inferred from homology"/>
<reference key="1">
    <citation type="journal article" date="2001" name="J. Bacteriol.">
        <title>Genome sequence and comparative analysis of the solvent-producing bacterium Clostridium acetobutylicum.</title>
        <authorList>
            <person name="Noelling J."/>
            <person name="Breton G."/>
            <person name="Omelchenko M.V."/>
            <person name="Makarova K.S."/>
            <person name="Zeng Q."/>
            <person name="Gibson R."/>
            <person name="Lee H.M."/>
            <person name="Dubois J."/>
            <person name="Qiu D."/>
            <person name="Hitti J."/>
            <person name="Wolf Y.I."/>
            <person name="Tatusov R.L."/>
            <person name="Sabathe F."/>
            <person name="Doucette-Stamm L.A."/>
            <person name="Soucaille P."/>
            <person name="Daly M.J."/>
            <person name="Bennett G.N."/>
            <person name="Koonin E.V."/>
            <person name="Smith D.R."/>
        </authorList>
    </citation>
    <scope>NUCLEOTIDE SEQUENCE [LARGE SCALE GENOMIC DNA]</scope>
    <source>
        <strain>ATCC 824 / DSM 792 / JCM 1419 / IAM 19013 / LMG 5710 / NBRC 13948 / NRRL B-527 / VKM B-1787 / 2291 / W</strain>
    </source>
</reference>
<organism>
    <name type="scientific">Clostridium acetobutylicum (strain ATCC 824 / DSM 792 / JCM 1419 / IAM 19013 / LMG 5710 / NBRC 13948 / NRRL B-527 / VKM B-1787 / 2291 / W)</name>
    <dbReference type="NCBI Taxonomy" id="272562"/>
    <lineage>
        <taxon>Bacteria</taxon>
        <taxon>Bacillati</taxon>
        <taxon>Bacillota</taxon>
        <taxon>Clostridia</taxon>
        <taxon>Eubacteriales</taxon>
        <taxon>Clostridiaceae</taxon>
        <taxon>Clostridium</taxon>
    </lineage>
</organism>
<dbReference type="EC" id="4.1.2.13" evidence="1"/>
<dbReference type="EMBL" id="AE001438">
    <property type="protein sequence ID" value="AAK76810.1"/>
    <property type="molecule type" value="Genomic_DNA"/>
</dbReference>
<dbReference type="RefSeq" id="NP_149228.1">
    <property type="nucleotide sequence ID" value="NC_001988.2"/>
</dbReference>
<dbReference type="RefSeq" id="WP_010890749.1">
    <property type="nucleotide sequence ID" value="NC_001988.2"/>
</dbReference>
<dbReference type="SMR" id="Q97TN4"/>
<dbReference type="KEGG" id="cac:CA_P0064"/>
<dbReference type="PATRIC" id="fig|272562.8.peg.64"/>
<dbReference type="HOGENOM" id="CLU_081560_0_0_9"/>
<dbReference type="OrthoDB" id="9813469at2"/>
<dbReference type="UniPathway" id="UPA00109">
    <property type="reaction ID" value="UER00183"/>
</dbReference>
<dbReference type="Proteomes" id="UP000000814">
    <property type="component" value="Plasmid pSOL1"/>
</dbReference>
<dbReference type="GO" id="GO:0004332">
    <property type="term" value="F:fructose-bisphosphate aldolase activity"/>
    <property type="evidence" value="ECO:0007669"/>
    <property type="project" value="UniProtKB-UniRule"/>
</dbReference>
<dbReference type="GO" id="GO:0006096">
    <property type="term" value="P:glycolytic process"/>
    <property type="evidence" value="ECO:0007669"/>
    <property type="project" value="UniProtKB-UniRule"/>
</dbReference>
<dbReference type="CDD" id="cd00949">
    <property type="entry name" value="FBP_aldolase_I_bact"/>
    <property type="match status" value="1"/>
</dbReference>
<dbReference type="Gene3D" id="3.20.20.70">
    <property type="entry name" value="Aldolase class I"/>
    <property type="match status" value="1"/>
</dbReference>
<dbReference type="HAMAP" id="MF_00729">
    <property type="entry name" value="FBP_aldolase_1"/>
    <property type="match status" value="1"/>
</dbReference>
<dbReference type="InterPro" id="IPR013785">
    <property type="entry name" value="Aldolase_TIM"/>
</dbReference>
<dbReference type="InterPro" id="IPR000741">
    <property type="entry name" value="FBA_I"/>
</dbReference>
<dbReference type="InterPro" id="IPR023014">
    <property type="entry name" value="FBA_I_Gram+-type"/>
</dbReference>
<dbReference type="NCBIfam" id="NF003784">
    <property type="entry name" value="PRK05377.1"/>
    <property type="match status" value="1"/>
</dbReference>
<dbReference type="PANTHER" id="PTHR11627">
    <property type="entry name" value="FRUCTOSE-BISPHOSPHATE ALDOLASE"/>
    <property type="match status" value="1"/>
</dbReference>
<dbReference type="Pfam" id="PF00274">
    <property type="entry name" value="Glycolytic"/>
    <property type="match status" value="1"/>
</dbReference>
<dbReference type="SUPFAM" id="SSF51569">
    <property type="entry name" value="Aldolase"/>
    <property type="match status" value="1"/>
</dbReference>
<sequence length="295" mass="33505">MNETQMNRISKDKGFIAALDQSGGSTPKALLQYGIKENSYSNDEEMFNLVHEMRKRIIKSTAFNSKYILGAILFENTMYRTIDHKYTADYLWNEKNIVPFLKIDKGLSELENGVQLMKPITNLDELLKAAIEKNIFGTKMRSFIKEANSKGIKMVVDQQFELADKIANQGLVPIIEPEVDIKSTDKEKSEELLKLEISKHLSDLDKETKVMLKLSIPTKDNFYSDLMKDPHVVRIVALSGGYSQSEANERLSRNNGLIASFSRALSENLSIDQTDEEFNETLSNSIKEIYEASIT</sequence>
<comment type="catalytic activity">
    <reaction evidence="1">
        <text>beta-D-fructose 1,6-bisphosphate = D-glyceraldehyde 3-phosphate + dihydroxyacetone phosphate</text>
        <dbReference type="Rhea" id="RHEA:14729"/>
        <dbReference type="ChEBI" id="CHEBI:32966"/>
        <dbReference type="ChEBI" id="CHEBI:57642"/>
        <dbReference type="ChEBI" id="CHEBI:59776"/>
        <dbReference type="EC" id="4.1.2.13"/>
    </reaction>
</comment>
<comment type="pathway">
    <text evidence="1">Carbohydrate degradation; glycolysis; D-glyceraldehyde 3-phosphate and glycerone phosphate from D-glucose: step 4/4.</text>
</comment>
<comment type="similarity">
    <text evidence="1">Belongs to the class I fructose-bisphosphate aldolase family.</text>
</comment>
<protein>
    <recommendedName>
        <fullName evidence="1">Fructose-bisphosphate aldolase class 1</fullName>
        <ecNumber evidence="1">4.1.2.13</ecNumber>
    </recommendedName>
    <alternativeName>
        <fullName>Fructose-bisphosphate aldolase class I</fullName>
        <shortName evidence="1">FBP aldolase</shortName>
    </alternativeName>
</protein>
<gene>
    <name evidence="1" type="primary">fda</name>
    <name type="ordered locus">CA_P0064</name>
</gene>
<evidence type="ECO:0000255" key="1">
    <source>
        <dbReference type="HAMAP-Rule" id="MF_00729"/>
    </source>
</evidence>
<accession>Q97TN4</accession>
<feature type="chain" id="PRO_0000216899" description="Fructose-bisphosphate aldolase class 1">
    <location>
        <begin position="1"/>
        <end position="295"/>
    </location>
</feature>
<feature type="active site" description="Proton acceptor" evidence="1">
    <location>
        <position position="176"/>
    </location>
</feature>
<feature type="active site" description="Schiff-base intermediate with dihydroxyacetone-P" evidence="1">
    <location>
        <position position="213"/>
    </location>
</feature>
<geneLocation type="plasmid">
    <name>pSOL1</name>
</geneLocation>